<keyword id="KW-0067">ATP-binding</keyword>
<keyword id="KW-0119">Carbohydrate metabolism</keyword>
<keyword id="KW-0418">Kinase</keyword>
<keyword id="KW-0547">Nucleotide-binding</keyword>
<keyword id="KW-1185">Reference proteome</keyword>
<keyword id="KW-0808">Transferase</keyword>
<dbReference type="EC" id="2.7.1.170" evidence="1"/>
<dbReference type="EMBL" id="CP000800">
    <property type="protein sequence ID" value="ABV17086.1"/>
    <property type="molecule type" value="Genomic_DNA"/>
</dbReference>
<dbReference type="RefSeq" id="WP_000835044.1">
    <property type="nucleotide sequence ID" value="NC_009801.1"/>
</dbReference>
<dbReference type="SMR" id="A7ZMA2"/>
<dbReference type="KEGG" id="ecw:EcE24377A_1850"/>
<dbReference type="HOGENOM" id="CLU_038782_0_0_6"/>
<dbReference type="UniPathway" id="UPA00343"/>
<dbReference type="UniPathway" id="UPA00544"/>
<dbReference type="Proteomes" id="UP000001122">
    <property type="component" value="Chromosome"/>
</dbReference>
<dbReference type="GO" id="GO:0005524">
    <property type="term" value="F:ATP binding"/>
    <property type="evidence" value="ECO:0007669"/>
    <property type="project" value="UniProtKB-UniRule"/>
</dbReference>
<dbReference type="GO" id="GO:0016301">
    <property type="term" value="F:kinase activity"/>
    <property type="evidence" value="ECO:0007669"/>
    <property type="project" value="UniProtKB-KW"/>
</dbReference>
<dbReference type="GO" id="GO:0016773">
    <property type="term" value="F:phosphotransferase activity, alcohol group as acceptor"/>
    <property type="evidence" value="ECO:0007669"/>
    <property type="project" value="UniProtKB-UniRule"/>
</dbReference>
<dbReference type="GO" id="GO:0097175">
    <property type="term" value="P:1,6-anhydro-N-acetyl-beta-muramic acid catabolic process"/>
    <property type="evidence" value="ECO:0007669"/>
    <property type="project" value="UniProtKB-UniRule"/>
</dbReference>
<dbReference type="GO" id="GO:0006040">
    <property type="term" value="P:amino sugar metabolic process"/>
    <property type="evidence" value="ECO:0007669"/>
    <property type="project" value="InterPro"/>
</dbReference>
<dbReference type="GO" id="GO:0009254">
    <property type="term" value="P:peptidoglycan turnover"/>
    <property type="evidence" value="ECO:0007669"/>
    <property type="project" value="UniProtKB-UniRule"/>
</dbReference>
<dbReference type="CDD" id="cd24050">
    <property type="entry name" value="ASKHA_NBD_ANMK"/>
    <property type="match status" value="1"/>
</dbReference>
<dbReference type="FunFam" id="3.30.420.40:FF:000090">
    <property type="entry name" value="Anhydro-N-acetylmuramic acid kinase"/>
    <property type="match status" value="1"/>
</dbReference>
<dbReference type="Gene3D" id="3.30.420.40">
    <property type="match status" value="2"/>
</dbReference>
<dbReference type="HAMAP" id="MF_01270">
    <property type="entry name" value="AnhMurNAc_kinase"/>
    <property type="match status" value="1"/>
</dbReference>
<dbReference type="InterPro" id="IPR005338">
    <property type="entry name" value="Anhydro_N_Ac-Mur_kinase"/>
</dbReference>
<dbReference type="InterPro" id="IPR043129">
    <property type="entry name" value="ATPase_NBD"/>
</dbReference>
<dbReference type="NCBIfam" id="NF007138">
    <property type="entry name" value="PRK09585.1-1"/>
    <property type="match status" value="1"/>
</dbReference>
<dbReference type="NCBIfam" id="NF007139">
    <property type="entry name" value="PRK09585.1-3"/>
    <property type="match status" value="1"/>
</dbReference>
<dbReference type="NCBIfam" id="NF007148">
    <property type="entry name" value="PRK09585.3-2"/>
    <property type="match status" value="1"/>
</dbReference>
<dbReference type="PANTHER" id="PTHR30605">
    <property type="entry name" value="ANHYDRO-N-ACETYLMURAMIC ACID KINASE"/>
    <property type="match status" value="1"/>
</dbReference>
<dbReference type="PANTHER" id="PTHR30605:SF0">
    <property type="entry name" value="ANHYDRO-N-ACETYLMURAMIC ACID KINASE"/>
    <property type="match status" value="1"/>
</dbReference>
<dbReference type="Pfam" id="PF03702">
    <property type="entry name" value="AnmK"/>
    <property type="match status" value="1"/>
</dbReference>
<dbReference type="SUPFAM" id="SSF53067">
    <property type="entry name" value="Actin-like ATPase domain"/>
    <property type="match status" value="1"/>
</dbReference>
<accession>A7ZMA2</accession>
<gene>
    <name evidence="1" type="primary">anmK</name>
    <name type="ordered locus">EcE24377A_1850</name>
</gene>
<feature type="chain" id="PRO_1000067344" description="Anhydro-N-acetylmuramic acid kinase">
    <location>
        <begin position="1"/>
        <end position="369"/>
    </location>
</feature>
<feature type="binding site" evidence="1">
    <location>
        <begin position="12"/>
        <end position="19"/>
    </location>
    <ligand>
        <name>ATP</name>
        <dbReference type="ChEBI" id="CHEBI:30616"/>
    </ligand>
</feature>
<proteinExistence type="inferred from homology"/>
<comment type="function">
    <text evidence="1">Catalyzes the specific phosphorylation of 1,6-anhydro-N-acetylmuramic acid (anhMurNAc) with the simultaneous cleavage of the 1,6-anhydro ring, generating MurNAc-6-P. Is required for the utilization of anhMurNAc either imported from the medium or derived from its own cell wall murein, and thus plays a role in cell wall recycling.</text>
</comment>
<comment type="catalytic activity">
    <reaction evidence="1">
        <text>1,6-anhydro-N-acetyl-beta-muramate + ATP + H2O = N-acetyl-D-muramate 6-phosphate + ADP + H(+)</text>
        <dbReference type="Rhea" id="RHEA:24952"/>
        <dbReference type="ChEBI" id="CHEBI:15377"/>
        <dbReference type="ChEBI" id="CHEBI:15378"/>
        <dbReference type="ChEBI" id="CHEBI:30616"/>
        <dbReference type="ChEBI" id="CHEBI:58690"/>
        <dbReference type="ChEBI" id="CHEBI:58722"/>
        <dbReference type="ChEBI" id="CHEBI:456216"/>
        <dbReference type="EC" id="2.7.1.170"/>
    </reaction>
</comment>
<comment type="pathway">
    <text evidence="1">Amino-sugar metabolism; 1,6-anhydro-N-acetylmuramate degradation.</text>
</comment>
<comment type="pathway">
    <text evidence="1">Cell wall biogenesis; peptidoglycan recycling.</text>
</comment>
<comment type="similarity">
    <text evidence="1">Belongs to the anhydro-N-acetylmuramic acid kinase family.</text>
</comment>
<protein>
    <recommendedName>
        <fullName evidence="1">Anhydro-N-acetylmuramic acid kinase</fullName>
        <ecNumber evidence="1">2.7.1.170</ecNumber>
    </recommendedName>
    <alternativeName>
        <fullName evidence="1">AnhMurNAc kinase</fullName>
    </alternativeName>
</protein>
<organism>
    <name type="scientific">Escherichia coli O139:H28 (strain E24377A / ETEC)</name>
    <dbReference type="NCBI Taxonomy" id="331111"/>
    <lineage>
        <taxon>Bacteria</taxon>
        <taxon>Pseudomonadati</taxon>
        <taxon>Pseudomonadota</taxon>
        <taxon>Gammaproteobacteria</taxon>
        <taxon>Enterobacterales</taxon>
        <taxon>Enterobacteriaceae</taxon>
        <taxon>Escherichia</taxon>
    </lineage>
</organism>
<reference key="1">
    <citation type="journal article" date="2008" name="J. Bacteriol.">
        <title>The pangenome structure of Escherichia coli: comparative genomic analysis of E. coli commensal and pathogenic isolates.</title>
        <authorList>
            <person name="Rasko D.A."/>
            <person name="Rosovitz M.J."/>
            <person name="Myers G.S.A."/>
            <person name="Mongodin E.F."/>
            <person name="Fricke W.F."/>
            <person name="Gajer P."/>
            <person name="Crabtree J."/>
            <person name="Sebaihia M."/>
            <person name="Thomson N.R."/>
            <person name="Chaudhuri R."/>
            <person name="Henderson I.R."/>
            <person name="Sperandio V."/>
            <person name="Ravel J."/>
        </authorList>
    </citation>
    <scope>NUCLEOTIDE SEQUENCE [LARGE SCALE GENOMIC DNA]</scope>
    <source>
        <strain>E24377A / ETEC</strain>
    </source>
</reference>
<name>ANMK_ECO24</name>
<evidence type="ECO:0000255" key="1">
    <source>
        <dbReference type="HAMAP-Rule" id="MF_01270"/>
    </source>
</evidence>
<sequence>MKSGRFIGVMSGTSLDGVDVVLATIDEHRVAQLASLSWPIPVSLKQAVLDICQGQQLTLSQFGQLDTQLGRLFADAVNALLKEQNLQARDIVAIGCHGQAVWHEPTGVAPHTLQIGDNNQIVARTGITVVGDFRRRDIALGGQGAPLVPAFHHALLAHSTERRMVLNIGGIANLSLLIPGQPVGGYDTGPGNMLMDAWIWRQAGKPYDKDAEWARAGKVILPLLQNMLSDPYFSQPAPKSTGREYFNYGWLERHLRHFPGVDPRDVQATLAELTAVTISEQVLLSGGCERLMVCGGGSRNPLLMARLAALLPGTEVTTTDAVGISGDDMEALAFAWLAWRTLAGLPGNLPSVTGASQETVLGAIFPANP</sequence>